<sequence length="298" mass="31750">MLDKLTTELRNEKTMNLDEMNTIEILTAMNEEDHRVPQQIAQALPAIAPLVEETIKAMKQGGRLIYVGAGTSGRLGVLDAAECPPTFGVAPDRVIGLIAGGEKAFIEAKEGAEDDEGLGEADLKKIQLTVRDVVVGIAASGRTPYVIGALKYANQVGAVTGSLACNRGAAISRIATYPIEVETGSEVLTGSTRLKAGTAQKLVLNMISTTVMIGLGKAYKNLMVDLKPTNEKLRERSKRIIMEATDVEAAVAEKHLREAGGVVKVAIITILTGCSVDQAQMTLDRNGGFIRKAVHELN</sequence>
<name>MURQ_HALH5</name>
<protein>
    <recommendedName>
        <fullName evidence="1">N-acetylmuramic acid 6-phosphate etherase</fullName>
        <shortName evidence="1">MurNAc-6-P etherase</shortName>
        <ecNumber evidence="1">4.2.1.126</ecNumber>
    </recommendedName>
    <alternativeName>
        <fullName evidence="1">N-acetylmuramic acid 6-phosphate hydrolase</fullName>
    </alternativeName>
    <alternativeName>
        <fullName evidence="1">N-acetylmuramic acid 6-phosphate lyase</fullName>
    </alternativeName>
</protein>
<dbReference type="EC" id="4.2.1.126" evidence="1"/>
<dbReference type="EMBL" id="BA000004">
    <property type="protein sequence ID" value="BAB07294.1"/>
    <property type="molecule type" value="Genomic_DNA"/>
</dbReference>
<dbReference type="PIR" id="G84096">
    <property type="entry name" value="G84096"/>
</dbReference>
<dbReference type="RefSeq" id="WP_010899703.1">
    <property type="nucleotide sequence ID" value="NC_002570.2"/>
</dbReference>
<dbReference type="SMR" id="Q9K6Z9"/>
<dbReference type="STRING" id="272558.gene:10729488"/>
<dbReference type="GeneID" id="87599104"/>
<dbReference type="KEGG" id="bha:BH3575"/>
<dbReference type="eggNOG" id="COG2103">
    <property type="taxonomic scope" value="Bacteria"/>
</dbReference>
<dbReference type="HOGENOM" id="CLU_049049_1_1_9"/>
<dbReference type="OrthoDB" id="9813395at2"/>
<dbReference type="UniPathway" id="UPA00342"/>
<dbReference type="Proteomes" id="UP000001258">
    <property type="component" value="Chromosome"/>
</dbReference>
<dbReference type="GO" id="GO:0097367">
    <property type="term" value="F:carbohydrate derivative binding"/>
    <property type="evidence" value="ECO:0007669"/>
    <property type="project" value="InterPro"/>
</dbReference>
<dbReference type="GO" id="GO:0016835">
    <property type="term" value="F:carbon-oxygen lyase activity"/>
    <property type="evidence" value="ECO:0007669"/>
    <property type="project" value="UniProtKB-UniRule"/>
</dbReference>
<dbReference type="GO" id="GO:0016803">
    <property type="term" value="F:ether hydrolase activity"/>
    <property type="evidence" value="ECO:0007669"/>
    <property type="project" value="TreeGrafter"/>
</dbReference>
<dbReference type="GO" id="GO:0046348">
    <property type="term" value="P:amino sugar catabolic process"/>
    <property type="evidence" value="ECO:0007669"/>
    <property type="project" value="InterPro"/>
</dbReference>
<dbReference type="GO" id="GO:0097173">
    <property type="term" value="P:N-acetylmuramic acid catabolic process"/>
    <property type="evidence" value="ECO:0007669"/>
    <property type="project" value="UniProtKB-UniPathway"/>
</dbReference>
<dbReference type="GO" id="GO:0009254">
    <property type="term" value="P:peptidoglycan turnover"/>
    <property type="evidence" value="ECO:0007669"/>
    <property type="project" value="TreeGrafter"/>
</dbReference>
<dbReference type="CDD" id="cd05007">
    <property type="entry name" value="SIS_Etherase"/>
    <property type="match status" value="1"/>
</dbReference>
<dbReference type="FunFam" id="1.10.8.1080:FF:000001">
    <property type="entry name" value="N-acetylmuramic acid 6-phosphate etherase"/>
    <property type="match status" value="1"/>
</dbReference>
<dbReference type="FunFam" id="3.40.50.10490:FF:000014">
    <property type="entry name" value="N-acetylmuramic acid 6-phosphate etherase"/>
    <property type="match status" value="1"/>
</dbReference>
<dbReference type="Gene3D" id="1.10.8.1080">
    <property type="match status" value="1"/>
</dbReference>
<dbReference type="Gene3D" id="3.40.50.10490">
    <property type="entry name" value="Glucose-6-phosphate isomerase like protein, domain 1"/>
    <property type="match status" value="1"/>
</dbReference>
<dbReference type="HAMAP" id="MF_00068">
    <property type="entry name" value="MurQ"/>
    <property type="match status" value="1"/>
</dbReference>
<dbReference type="InterPro" id="IPR005488">
    <property type="entry name" value="Etherase_MurQ"/>
</dbReference>
<dbReference type="InterPro" id="IPR040190">
    <property type="entry name" value="MURQ/GCKR"/>
</dbReference>
<dbReference type="InterPro" id="IPR001347">
    <property type="entry name" value="SIS_dom"/>
</dbReference>
<dbReference type="InterPro" id="IPR046348">
    <property type="entry name" value="SIS_dom_sf"/>
</dbReference>
<dbReference type="NCBIfam" id="TIGR00274">
    <property type="entry name" value="N-acetylmuramic acid 6-phosphate etherase"/>
    <property type="match status" value="1"/>
</dbReference>
<dbReference type="NCBIfam" id="NF003915">
    <property type="entry name" value="PRK05441.1"/>
    <property type="match status" value="1"/>
</dbReference>
<dbReference type="NCBIfam" id="NF009222">
    <property type="entry name" value="PRK12570.1"/>
    <property type="match status" value="1"/>
</dbReference>
<dbReference type="PANTHER" id="PTHR10088">
    <property type="entry name" value="GLUCOKINASE REGULATORY PROTEIN"/>
    <property type="match status" value="1"/>
</dbReference>
<dbReference type="PANTHER" id="PTHR10088:SF4">
    <property type="entry name" value="GLUCOKINASE REGULATORY PROTEIN"/>
    <property type="match status" value="1"/>
</dbReference>
<dbReference type="Pfam" id="PF22645">
    <property type="entry name" value="GKRP_SIS_N"/>
    <property type="match status" value="1"/>
</dbReference>
<dbReference type="SUPFAM" id="SSF53697">
    <property type="entry name" value="SIS domain"/>
    <property type="match status" value="1"/>
</dbReference>
<dbReference type="PROSITE" id="PS51464">
    <property type="entry name" value="SIS"/>
    <property type="match status" value="1"/>
</dbReference>
<reference key="1">
    <citation type="journal article" date="2000" name="Nucleic Acids Res.">
        <title>Complete genome sequence of the alkaliphilic bacterium Bacillus halodurans and genomic sequence comparison with Bacillus subtilis.</title>
        <authorList>
            <person name="Takami H."/>
            <person name="Nakasone K."/>
            <person name="Takaki Y."/>
            <person name="Maeno G."/>
            <person name="Sasaki R."/>
            <person name="Masui N."/>
            <person name="Fuji F."/>
            <person name="Hirama C."/>
            <person name="Nakamura Y."/>
            <person name="Ogasawara N."/>
            <person name="Kuhara S."/>
            <person name="Horikoshi K."/>
        </authorList>
    </citation>
    <scope>NUCLEOTIDE SEQUENCE [LARGE SCALE GENOMIC DNA]</scope>
    <source>
        <strain>ATCC BAA-125 / DSM 18197 / FERM 7344 / JCM 9153 / C-125</strain>
    </source>
</reference>
<feature type="chain" id="PRO_0000249608" description="N-acetylmuramic acid 6-phosphate etherase">
    <location>
        <begin position="1"/>
        <end position="298"/>
    </location>
</feature>
<feature type="domain" description="SIS" evidence="1">
    <location>
        <begin position="54"/>
        <end position="217"/>
    </location>
</feature>
<feature type="active site" description="Proton donor" evidence="1">
    <location>
        <position position="82"/>
    </location>
</feature>
<feature type="active site" evidence="1">
    <location>
        <position position="113"/>
    </location>
</feature>
<gene>
    <name evidence="1" type="primary">murQ</name>
    <name type="ordered locus">BH3575</name>
</gene>
<evidence type="ECO:0000255" key="1">
    <source>
        <dbReference type="HAMAP-Rule" id="MF_00068"/>
    </source>
</evidence>
<proteinExistence type="inferred from homology"/>
<organism>
    <name type="scientific">Halalkalibacterium halodurans (strain ATCC BAA-125 / DSM 18197 / FERM 7344 / JCM 9153 / C-125)</name>
    <name type="common">Bacillus halodurans</name>
    <dbReference type="NCBI Taxonomy" id="272558"/>
    <lineage>
        <taxon>Bacteria</taxon>
        <taxon>Bacillati</taxon>
        <taxon>Bacillota</taxon>
        <taxon>Bacilli</taxon>
        <taxon>Bacillales</taxon>
        <taxon>Bacillaceae</taxon>
        <taxon>Halalkalibacterium (ex Joshi et al. 2022)</taxon>
    </lineage>
</organism>
<comment type="function">
    <text evidence="1">Specifically catalyzes the cleavage of the D-lactyl ether substituent of MurNAc 6-phosphate, producing GlcNAc 6-phosphate and D-lactate.</text>
</comment>
<comment type="catalytic activity">
    <reaction evidence="1">
        <text>N-acetyl-D-muramate 6-phosphate + H2O = N-acetyl-D-glucosamine 6-phosphate + (R)-lactate</text>
        <dbReference type="Rhea" id="RHEA:26410"/>
        <dbReference type="ChEBI" id="CHEBI:15377"/>
        <dbReference type="ChEBI" id="CHEBI:16004"/>
        <dbReference type="ChEBI" id="CHEBI:57513"/>
        <dbReference type="ChEBI" id="CHEBI:58722"/>
        <dbReference type="EC" id="4.2.1.126"/>
    </reaction>
</comment>
<comment type="pathway">
    <text evidence="1">Amino-sugar metabolism; N-acetylmuramate degradation.</text>
</comment>
<comment type="subunit">
    <text evidence="1">Homodimer.</text>
</comment>
<comment type="miscellaneous">
    <text evidence="1">A lyase-type mechanism (elimination/hydration) is suggested for the cleavage of the lactyl ether bond of MurNAc 6-phosphate, with the formation of an alpha,beta-unsaturated aldehyde intermediate with (E)-stereochemistry, followed by the syn addition of water to give product.</text>
</comment>
<comment type="similarity">
    <text evidence="1">Belongs to the GCKR-like family. MurNAc-6-P etherase subfamily.</text>
</comment>
<accession>Q9K6Z9</accession>
<keyword id="KW-0119">Carbohydrate metabolism</keyword>
<keyword id="KW-0456">Lyase</keyword>
<keyword id="KW-1185">Reference proteome</keyword>